<dbReference type="EC" id="5.4.99.25" evidence="2"/>
<dbReference type="EMBL" id="L77117">
    <property type="protein sequence ID" value="AAB98022.1"/>
    <property type="molecule type" value="Genomic_DNA"/>
</dbReference>
<dbReference type="PIR" id="A64305">
    <property type="entry name" value="A64305"/>
</dbReference>
<dbReference type="SMR" id="Q60346"/>
<dbReference type="FunCoup" id="Q60346">
    <property type="interactions" value="1"/>
</dbReference>
<dbReference type="STRING" id="243232.MJ_0041"/>
<dbReference type="PaxDb" id="243232-MJ_0041"/>
<dbReference type="EnsemblBacteria" id="AAB98022">
    <property type="protein sequence ID" value="AAB98022"/>
    <property type="gene ID" value="MJ_0041"/>
</dbReference>
<dbReference type="KEGG" id="mja:MJ_0041"/>
<dbReference type="eggNOG" id="arCOG01015">
    <property type="taxonomic scope" value="Archaea"/>
</dbReference>
<dbReference type="HOGENOM" id="CLU_028780_2_0_2"/>
<dbReference type="InParanoid" id="Q60346"/>
<dbReference type="PhylomeDB" id="Q60346"/>
<dbReference type="BRENDA" id="5.4.99.25">
    <property type="organism ID" value="3260"/>
</dbReference>
<dbReference type="BRENDA" id="5.4.99.B22">
    <property type="organism ID" value="3260"/>
</dbReference>
<dbReference type="BRENDA" id="5.4.99.B25">
    <property type="organism ID" value="3260"/>
</dbReference>
<dbReference type="Proteomes" id="UP000000805">
    <property type="component" value="Chromosome"/>
</dbReference>
<dbReference type="GO" id="GO:0009982">
    <property type="term" value="F:pseudouridine synthase activity"/>
    <property type="evidence" value="ECO:0000314"/>
    <property type="project" value="UniProtKB"/>
</dbReference>
<dbReference type="GO" id="GO:0000049">
    <property type="term" value="F:tRNA binding"/>
    <property type="evidence" value="ECO:0007669"/>
    <property type="project" value="InterPro"/>
</dbReference>
<dbReference type="GO" id="GO:0160148">
    <property type="term" value="F:tRNA pseudouridine(55) synthase activity"/>
    <property type="evidence" value="ECO:0007669"/>
    <property type="project" value="UniProtKB-EC"/>
</dbReference>
<dbReference type="GO" id="GO:0031119">
    <property type="term" value="P:tRNA pseudouridine synthesis"/>
    <property type="evidence" value="ECO:0000314"/>
    <property type="project" value="UniProtKB"/>
</dbReference>
<dbReference type="FunFam" id="3.30.70.2510:FF:000001">
    <property type="entry name" value="tRNA pseudouridine synthase Pus10"/>
    <property type="match status" value="1"/>
</dbReference>
<dbReference type="FunFam" id="3.30.70.3190:FF:000001">
    <property type="entry name" value="tRNA pseudouridine synthase Pus10"/>
    <property type="match status" value="1"/>
</dbReference>
<dbReference type="Gene3D" id="3.30.70.2510">
    <property type="match status" value="1"/>
</dbReference>
<dbReference type="Gene3D" id="3.30.70.3190">
    <property type="match status" value="1"/>
</dbReference>
<dbReference type="HAMAP" id="MF_01893">
    <property type="entry name" value="Pus10_arch"/>
    <property type="match status" value="1"/>
</dbReference>
<dbReference type="InterPro" id="IPR020103">
    <property type="entry name" value="PsdUridine_synth_cat_dom_sf"/>
</dbReference>
<dbReference type="InterPro" id="IPR005912">
    <property type="entry name" value="Pus10"/>
</dbReference>
<dbReference type="InterPro" id="IPR039894">
    <property type="entry name" value="Pus10-like"/>
</dbReference>
<dbReference type="InterPro" id="IPR048741">
    <property type="entry name" value="Pus10-like_C"/>
</dbReference>
<dbReference type="InterPro" id="IPR055174">
    <property type="entry name" value="Pus10_THUMP_arc"/>
</dbReference>
<dbReference type="InterPro" id="IPR004114">
    <property type="entry name" value="THUMP_dom"/>
</dbReference>
<dbReference type="NCBIfam" id="TIGR01213">
    <property type="entry name" value="pseudo_Pus10arc"/>
    <property type="match status" value="1"/>
</dbReference>
<dbReference type="PANTHER" id="PTHR21568">
    <property type="entry name" value="TRNA PSEUDOURIDINE SYNTHASE PUS10"/>
    <property type="match status" value="1"/>
</dbReference>
<dbReference type="PANTHER" id="PTHR21568:SF0">
    <property type="entry name" value="TRNA PSEUDOURIDINE SYNTHASE PUS10"/>
    <property type="match status" value="1"/>
</dbReference>
<dbReference type="Pfam" id="PF21238">
    <property type="entry name" value="Pus10_C"/>
    <property type="match status" value="1"/>
</dbReference>
<dbReference type="Pfam" id="PF22023">
    <property type="entry name" value="Pus10_THUMP_arc"/>
    <property type="match status" value="1"/>
</dbReference>
<dbReference type="SUPFAM" id="SSF55120">
    <property type="entry name" value="Pseudouridine synthase"/>
    <property type="match status" value="1"/>
</dbReference>
<dbReference type="PROSITE" id="PS51165">
    <property type="entry name" value="THUMP"/>
    <property type="match status" value="1"/>
</dbReference>
<feature type="chain" id="PRO_0000106664" description="tRNA pseudouridine synthase Pus10">
    <location>
        <begin position="1"/>
        <end position="454"/>
    </location>
</feature>
<feature type="domain" description="THUMP">
    <location>
        <begin position="100"/>
        <end position="206"/>
    </location>
</feature>
<feature type="active site" description="Nucleophile" evidence="1">
    <location>
        <position position="275"/>
    </location>
</feature>
<feature type="binding site" evidence="1">
    <location>
        <position position="339"/>
    </location>
    <ligand>
        <name>substrate</name>
    </ligand>
</feature>
<feature type="binding site" evidence="1">
    <location>
        <position position="411"/>
    </location>
    <ligand>
        <name>substrate</name>
    </ligand>
</feature>
<evidence type="ECO:0000255" key="1"/>
<evidence type="ECO:0000269" key="2">
    <source>
    </source>
</evidence>
<evidence type="ECO:0000305" key="3"/>
<proteinExistence type="evidence at protein level"/>
<keyword id="KW-0413">Isomerase</keyword>
<keyword id="KW-1185">Reference proteome</keyword>
<keyword id="KW-0694">RNA-binding</keyword>
<keyword id="KW-0819">tRNA processing</keyword>
<reference key="1">
    <citation type="journal article" date="1996" name="Science">
        <title>Complete genome sequence of the methanogenic archaeon, Methanococcus jannaschii.</title>
        <authorList>
            <person name="Bult C.J."/>
            <person name="White O."/>
            <person name="Olsen G.J."/>
            <person name="Zhou L."/>
            <person name="Fleischmann R.D."/>
            <person name="Sutton G.G."/>
            <person name="Blake J.A."/>
            <person name="FitzGerald L.M."/>
            <person name="Clayton R.A."/>
            <person name="Gocayne J.D."/>
            <person name="Kerlavage A.R."/>
            <person name="Dougherty B.A."/>
            <person name="Tomb J.-F."/>
            <person name="Adams M.D."/>
            <person name="Reich C.I."/>
            <person name="Overbeek R."/>
            <person name="Kirkness E.F."/>
            <person name="Weinstock K.G."/>
            <person name="Merrick J.M."/>
            <person name="Glodek A."/>
            <person name="Scott J.L."/>
            <person name="Geoghagen N.S.M."/>
            <person name="Weidman J.F."/>
            <person name="Fuhrmann J.L."/>
            <person name="Nguyen D."/>
            <person name="Utterback T.R."/>
            <person name="Kelley J.M."/>
            <person name="Peterson J.D."/>
            <person name="Sadow P.W."/>
            <person name="Hanna M.C."/>
            <person name="Cotton M.D."/>
            <person name="Roberts K.M."/>
            <person name="Hurst M.A."/>
            <person name="Kaine B.P."/>
            <person name="Borodovsky M."/>
            <person name="Klenk H.-P."/>
            <person name="Fraser C.M."/>
            <person name="Smith H.O."/>
            <person name="Woese C.R."/>
            <person name="Venter J.C."/>
        </authorList>
    </citation>
    <scope>NUCLEOTIDE SEQUENCE [LARGE SCALE GENOMIC DNA]</scope>
    <source>
        <strain>ATCC 43067 / DSM 2661 / JAL-1 / JCM 10045 / NBRC 100440</strain>
    </source>
</reference>
<reference key="2">
    <citation type="journal article" date="2008" name="RNA">
        <title>Archaeal Pus10 proteins can produce both pseudouridine 54 and 55 in tRNA.</title>
        <authorList>
            <person name="Gurha P."/>
            <person name="Gupta R."/>
        </authorList>
    </citation>
    <scope>FUNCTION</scope>
    <scope>CATALYTIC ACTIVITY</scope>
</reference>
<name>PUS10_METJA</name>
<accession>Q60346</accession>
<organism>
    <name type="scientific">Methanocaldococcus jannaschii (strain ATCC 43067 / DSM 2661 / JAL-1 / JCM 10045 / NBRC 100440)</name>
    <name type="common">Methanococcus jannaschii</name>
    <dbReference type="NCBI Taxonomy" id="243232"/>
    <lineage>
        <taxon>Archaea</taxon>
        <taxon>Methanobacteriati</taxon>
        <taxon>Methanobacteriota</taxon>
        <taxon>Methanomada group</taxon>
        <taxon>Methanococci</taxon>
        <taxon>Methanococcales</taxon>
        <taxon>Methanocaldococcaceae</taxon>
        <taxon>Methanocaldococcus</taxon>
    </lineage>
</organism>
<protein>
    <recommendedName>
        <fullName>tRNA pseudouridine synthase Pus10</fullName>
        <ecNumber evidence="2">5.4.99.25</ecNumber>
    </recommendedName>
    <alternativeName>
        <fullName>tRNA pseudouridine 54/55 synthase</fullName>
        <shortName>Psi54/55 synthase</shortName>
    </alternativeName>
</protein>
<gene>
    <name type="primary">pus10</name>
    <name type="ordered locus">MJ0041</name>
</gene>
<sequence length="454" mass="52927">MASIINKQIISPTGRNMEIINYEILKKYPLCDRCFGRLYAKLLHTTNTERGRALKLYKALELEAKIKKAKEKGINYEEELELLKALAKSGVDEIRLEDIEIEKENCPWCRGIFNKQKMEKLLNKAIELLKEYDFDTFLIGTHIPEEIKDLEKEIETEFMESIKQEFGREFGKMLAVRLDKAPDKEYPDIVVHINPYTEEIYLQINPLFIKGRYRKLVRGIPQTRWPCRKCRGKGCELCNYTGKKYPISVEEIIAKPFLEATKGVDAKFHGAGREDIDVRMLGDGRPFVLEIKEPKIRKIDLNKIAEEINKDGRVEVLNLEFGVRKDKVIFKNTPHRKTYRALVECSDKITDEELKLLEKELENRTIYQKTPKRVLHRRADLERIRKVYKVKTSKVDDNHFEMIIYCDGGLYIKELISGDDGRTNPSVSSILNKNCICKELDVLKIHDNNLLEKG</sequence>
<comment type="function">
    <text evidence="2">Responsible for synthesis of pseudouridine from uracil-54 and uracil-55 in the psi GC loop of transfer RNAs.</text>
</comment>
<comment type="catalytic activity">
    <reaction evidence="2">
        <text>uridine(54) in tRNA = pseudouridine(54) in tRNA</text>
        <dbReference type="Rhea" id="RHEA:57876"/>
        <dbReference type="Rhea" id="RHEA-COMP:10193"/>
        <dbReference type="Rhea" id="RHEA-COMP:14141"/>
        <dbReference type="ChEBI" id="CHEBI:65314"/>
        <dbReference type="ChEBI" id="CHEBI:65315"/>
    </reaction>
</comment>
<comment type="catalytic activity">
    <reaction evidence="2">
        <text>uridine(55) in tRNA = pseudouridine(55) in tRNA</text>
        <dbReference type="Rhea" id="RHEA:42532"/>
        <dbReference type="Rhea" id="RHEA-COMP:10101"/>
        <dbReference type="Rhea" id="RHEA-COMP:10102"/>
        <dbReference type="ChEBI" id="CHEBI:65314"/>
        <dbReference type="ChEBI" id="CHEBI:65315"/>
        <dbReference type="EC" id="5.4.99.25"/>
    </reaction>
</comment>
<comment type="similarity">
    <text evidence="3">Belongs to the pseudouridine synthase Pus10 family.</text>
</comment>